<proteinExistence type="inferred from homology"/>
<feature type="chain" id="PRO_0000112405" description="N-acetyl-gamma-glutamyl-phosphate reductase">
    <location>
        <begin position="1"/>
        <end position="347"/>
    </location>
</feature>
<feature type="active site" evidence="1">
    <location>
        <position position="152"/>
    </location>
</feature>
<keyword id="KW-0028">Amino-acid biosynthesis</keyword>
<keyword id="KW-0055">Arginine biosynthesis</keyword>
<keyword id="KW-0963">Cytoplasm</keyword>
<keyword id="KW-0521">NADP</keyword>
<keyword id="KW-0560">Oxidoreductase</keyword>
<dbReference type="EC" id="1.2.1.38" evidence="1"/>
<dbReference type="EMBL" id="CR767821">
    <property type="protein sequence ID" value="CAH58517.1"/>
    <property type="molecule type" value="Genomic_DNA"/>
</dbReference>
<dbReference type="EMBL" id="CR925678">
    <property type="protein sequence ID" value="CAI27322.1"/>
    <property type="molecule type" value="Genomic_DNA"/>
</dbReference>
<dbReference type="RefSeq" id="WP_011155462.1">
    <property type="nucleotide sequence ID" value="NC_005295.2"/>
</dbReference>
<dbReference type="SMR" id="Q5HA98"/>
<dbReference type="GeneID" id="33057984"/>
<dbReference type="KEGG" id="eru:Erum7830"/>
<dbReference type="KEGG" id="erw:ERWE_CDS_08280"/>
<dbReference type="eggNOG" id="COG0002">
    <property type="taxonomic scope" value="Bacteria"/>
</dbReference>
<dbReference type="HOGENOM" id="CLU_006384_0_1_5"/>
<dbReference type="UniPathway" id="UPA00068">
    <property type="reaction ID" value="UER00108"/>
</dbReference>
<dbReference type="Proteomes" id="UP000001021">
    <property type="component" value="Chromosome"/>
</dbReference>
<dbReference type="GO" id="GO:0005737">
    <property type="term" value="C:cytoplasm"/>
    <property type="evidence" value="ECO:0007669"/>
    <property type="project" value="UniProtKB-SubCell"/>
</dbReference>
<dbReference type="GO" id="GO:0003942">
    <property type="term" value="F:N-acetyl-gamma-glutamyl-phosphate reductase activity"/>
    <property type="evidence" value="ECO:0007669"/>
    <property type="project" value="UniProtKB-UniRule"/>
</dbReference>
<dbReference type="GO" id="GO:0051287">
    <property type="term" value="F:NAD binding"/>
    <property type="evidence" value="ECO:0007669"/>
    <property type="project" value="InterPro"/>
</dbReference>
<dbReference type="GO" id="GO:0070401">
    <property type="term" value="F:NADP+ binding"/>
    <property type="evidence" value="ECO:0007669"/>
    <property type="project" value="InterPro"/>
</dbReference>
<dbReference type="GO" id="GO:0006526">
    <property type="term" value="P:L-arginine biosynthetic process"/>
    <property type="evidence" value="ECO:0007669"/>
    <property type="project" value="UniProtKB-UniRule"/>
</dbReference>
<dbReference type="CDD" id="cd23934">
    <property type="entry name" value="AGPR_1_C"/>
    <property type="match status" value="1"/>
</dbReference>
<dbReference type="CDD" id="cd17895">
    <property type="entry name" value="AGPR_1_N"/>
    <property type="match status" value="1"/>
</dbReference>
<dbReference type="FunFam" id="3.30.360.10:FF:000014">
    <property type="entry name" value="N-acetyl-gamma-glutamyl-phosphate reductase"/>
    <property type="match status" value="1"/>
</dbReference>
<dbReference type="Gene3D" id="3.30.360.10">
    <property type="entry name" value="Dihydrodipicolinate Reductase, domain 2"/>
    <property type="match status" value="1"/>
</dbReference>
<dbReference type="Gene3D" id="3.40.50.720">
    <property type="entry name" value="NAD(P)-binding Rossmann-like Domain"/>
    <property type="match status" value="1"/>
</dbReference>
<dbReference type="HAMAP" id="MF_00150">
    <property type="entry name" value="ArgC_type1"/>
    <property type="match status" value="1"/>
</dbReference>
<dbReference type="InterPro" id="IPR023013">
    <property type="entry name" value="AGPR_AS"/>
</dbReference>
<dbReference type="InterPro" id="IPR000706">
    <property type="entry name" value="AGPR_type-1"/>
</dbReference>
<dbReference type="InterPro" id="IPR036291">
    <property type="entry name" value="NAD(P)-bd_dom_sf"/>
</dbReference>
<dbReference type="InterPro" id="IPR050085">
    <property type="entry name" value="NAGSA_dehydrogenase"/>
</dbReference>
<dbReference type="InterPro" id="IPR000534">
    <property type="entry name" value="Semialdehyde_DH_NAD-bd"/>
</dbReference>
<dbReference type="NCBIfam" id="TIGR01850">
    <property type="entry name" value="argC"/>
    <property type="match status" value="1"/>
</dbReference>
<dbReference type="PANTHER" id="PTHR32338:SF10">
    <property type="entry name" value="N-ACETYL-GAMMA-GLUTAMYL-PHOSPHATE REDUCTASE, CHLOROPLASTIC-RELATED"/>
    <property type="match status" value="1"/>
</dbReference>
<dbReference type="PANTHER" id="PTHR32338">
    <property type="entry name" value="N-ACETYL-GAMMA-GLUTAMYL-PHOSPHATE REDUCTASE, CHLOROPLASTIC-RELATED-RELATED"/>
    <property type="match status" value="1"/>
</dbReference>
<dbReference type="Pfam" id="PF01118">
    <property type="entry name" value="Semialdhyde_dh"/>
    <property type="match status" value="1"/>
</dbReference>
<dbReference type="Pfam" id="PF22698">
    <property type="entry name" value="Semialdhyde_dhC_1"/>
    <property type="match status" value="1"/>
</dbReference>
<dbReference type="SMART" id="SM00859">
    <property type="entry name" value="Semialdhyde_dh"/>
    <property type="match status" value="1"/>
</dbReference>
<dbReference type="SUPFAM" id="SSF55347">
    <property type="entry name" value="Glyceraldehyde-3-phosphate dehydrogenase-like, C-terminal domain"/>
    <property type="match status" value="1"/>
</dbReference>
<dbReference type="SUPFAM" id="SSF51735">
    <property type="entry name" value="NAD(P)-binding Rossmann-fold domains"/>
    <property type="match status" value="1"/>
</dbReference>
<dbReference type="PROSITE" id="PS01224">
    <property type="entry name" value="ARGC"/>
    <property type="match status" value="1"/>
</dbReference>
<gene>
    <name evidence="1" type="primary">argC</name>
    <name type="ordered locus">Erum7830</name>
    <name type="ordered locus">ERWE_CDS_08280</name>
</gene>
<name>ARGC_EHRRW</name>
<organism>
    <name type="scientific">Ehrlichia ruminantium (strain Welgevonden)</name>
    <dbReference type="NCBI Taxonomy" id="254945"/>
    <lineage>
        <taxon>Bacteria</taxon>
        <taxon>Pseudomonadati</taxon>
        <taxon>Pseudomonadota</taxon>
        <taxon>Alphaproteobacteria</taxon>
        <taxon>Rickettsiales</taxon>
        <taxon>Anaplasmataceae</taxon>
        <taxon>Ehrlichia</taxon>
    </lineage>
</organism>
<accession>Q5HA98</accession>
<accession>Q5FDQ1</accession>
<evidence type="ECO:0000255" key="1">
    <source>
        <dbReference type="HAMAP-Rule" id="MF_00150"/>
    </source>
</evidence>
<protein>
    <recommendedName>
        <fullName evidence="1">N-acetyl-gamma-glutamyl-phosphate reductase</fullName>
        <shortName evidence="1">AGPR</shortName>
        <ecNumber evidence="1">1.2.1.38</ecNumber>
    </recommendedName>
    <alternativeName>
        <fullName evidence="1">N-acetyl-glutamate semialdehyde dehydrogenase</fullName>
        <shortName evidence="1">NAGSA dehydrogenase</shortName>
    </alternativeName>
</protein>
<sequence length="347" mass="38870">MSYQVSVAVVGATGYVGVELVRLLLFHPMVKIKYLCATQSIGSLLSSHYDHVLKDSIPVSISCFSSIDLSKVDVIFLCLPHGQSNEIVKKIHNEVKIIIDLSADFRIKDIDTYKEWYGAHCCPDLIQDFVYGLTEIYWEEIKKSRFVACPGCYATSALVPLFPLLRLRLVKSQNIIVDAKSGVSGAGRSVDQKKLFCEIHDVIKSYNISKHRHIPEIEQELCFAACQENINVQFVPNLIPVKRGMLSSIYLELEEGVSPIDIREALLVFYKDSKFIFIDEEKAITTKSVIGTNYCYIGVFPGRIPNTVIIVCNIDNLLKGASGQAVQNFNIMMSCDETTALLNIPYL</sequence>
<comment type="function">
    <text evidence="1">Catalyzes the NADPH-dependent reduction of N-acetyl-5-glutamyl phosphate to yield N-acetyl-L-glutamate 5-semialdehyde.</text>
</comment>
<comment type="catalytic activity">
    <reaction evidence="1">
        <text>N-acetyl-L-glutamate 5-semialdehyde + phosphate + NADP(+) = N-acetyl-L-glutamyl 5-phosphate + NADPH + H(+)</text>
        <dbReference type="Rhea" id="RHEA:21588"/>
        <dbReference type="ChEBI" id="CHEBI:15378"/>
        <dbReference type="ChEBI" id="CHEBI:29123"/>
        <dbReference type="ChEBI" id="CHEBI:43474"/>
        <dbReference type="ChEBI" id="CHEBI:57783"/>
        <dbReference type="ChEBI" id="CHEBI:57936"/>
        <dbReference type="ChEBI" id="CHEBI:58349"/>
        <dbReference type="EC" id="1.2.1.38"/>
    </reaction>
</comment>
<comment type="pathway">
    <text evidence="1">Amino-acid biosynthesis; L-arginine biosynthesis; N(2)-acetyl-L-ornithine from L-glutamate: step 3/4.</text>
</comment>
<comment type="subcellular location">
    <subcellularLocation>
        <location evidence="1">Cytoplasm</location>
    </subcellularLocation>
</comment>
<comment type="similarity">
    <text evidence="1">Belongs to the NAGSA dehydrogenase family. Type 1 subfamily.</text>
</comment>
<reference key="1">
    <citation type="journal article" date="2005" name="Proc. Natl. Acad. Sci. U.S.A.">
        <title>The genome of the heartwater agent Ehrlichia ruminantium contains multiple tandem repeats of actively variable copy number.</title>
        <authorList>
            <person name="Collins N.E."/>
            <person name="Liebenberg J."/>
            <person name="de Villiers E.P."/>
            <person name="Brayton K.A."/>
            <person name="Louw E."/>
            <person name="Pretorius A."/>
            <person name="Faber F.E."/>
            <person name="van Heerden H."/>
            <person name="Josemans A."/>
            <person name="van Kleef M."/>
            <person name="Steyn H.C."/>
            <person name="van Strijp M.F."/>
            <person name="Zweygarth E."/>
            <person name="Jongejan F."/>
            <person name="Maillard J.C."/>
            <person name="Berthier D."/>
            <person name="Botha M."/>
            <person name="Joubert F."/>
            <person name="Corton C.H."/>
            <person name="Thomson N.R."/>
            <person name="Allsopp M.T."/>
            <person name="Allsopp B.A."/>
        </authorList>
    </citation>
    <scope>NUCLEOTIDE SEQUENCE [LARGE SCALE GENOMIC DNA]</scope>
    <source>
        <strain>Welgevonden</strain>
    </source>
</reference>
<reference key="2">
    <citation type="journal article" date="2006" name="J. Bacteriol.">
        <title>Comparative genomic analysis of three strains of Ehrlichia ruminantium reveals an active process of genome size plasticity.</title>
        <authorList>
            <person name="Frutos R."/>
            <person name="Viari A."/>
            <person name="Ferraz C."/>
            <person name="Morgat A."/>
            <person name="Eychenie S."/>
            <person name="Kandassamy Y."/>
            <person name="Chantal I."/>
            <person name="Bensaid A."/>
            <person name="Coissac E."/>
            <person name="Vachiery N."/>
            <person name="Demaille J."/>
            <person name="Martinez D."/>
        </authorList>
    </citation>
    <scope>NUCLEOTIDE SEQUENCE [LARGE SCALE GENOMIC DNA]</scope>
    <source>
        <strain>Welgevonden</strain>
    </source>
</reference>